<proteinExistence type="evidence at transcript level"/>
<organism>
    <name type="scientific">Bos taurus</name>
    <name type="common">Bovine</name>
    <dbReference type="NCBI Taxonomy" id="9913"/>
    <lineage>
        <taxon>Eukaryota</taxon>
        <taxon>Metazoa</taxon>
        <taxon>Chordata</taxon>
        <taxon>Craniata</taxon>
        <taxon>Vertebrata</taxon>
        <taxon>Euteleostomi</taxon>
        <taxon>Mammalia</taxon>
        <taxon>Eutheria</taxon>
        <taxon>Laurasiatheria</taxon>
        <taxon>Artiodactyla</taxon>
        <taxon>Ruminantia</taxon>
        <taxon>Pecora</taxon>
        <taxon>Bovidae</taxon>
        <taxon>Bovinae</taxon>
        <taxon>Bos</taxon>
    </lineage>
</organism>
<keyword id="KW-1185">Reference proteome</keyword>
<dbReference type="EMBL" id="BC146032">
    <property type="protein sequence ID" value="AAI46033.1"/>
    <property type="molecule type" value="mRNA"/>
</dbReference>
<dbReference type="EMBL" id="BC151574">
    <property type="protein sequence ID" value="AAI51575.1"/>
    <property type="molecule type" value="mRNA"/>
</dbReference>
<dbReference type="RefSeq" id="NP_001092857.1">
    <property type="nucleotide sequence ID" value="NM_001099387.2"/>
</dbReference>
<dbReference type="RefSeq" id="XP_010809033.1">
    <property type="nucleotide sequence ID" value="XM_010810731.4"/>
</dbReference>
<dbReference type="SMR" id="A6H6X4"/>
<dbReference type="FunCoup" id="A6H6X4">
    <property type="interactions" value="392"/>
</dbReference>
<dbReference type="STRING" id="9913.ENSBTAP00000025865"/>
<dbReference type="PaxDb" id="9913-ENSBTAP00000025865"/>
<dbReference type="Ensembl" id="ENSBTAT00000025865.4">
    <property type="protein sequence ID" value="ENSBTAP00000025865.2"/>
    <property type="gene ID" value="ENSBTAG00000019416.4"/>
</dbReference>
<dbReference type="GeneID" id="539536"/>
<dbReference type="KEGG" id="bta:539536"/>
<dbReference type="CTD" id="386618"/>
<dbReference type="VEuPathDB" id="HostDB:ENSBTAG00000019416"/>
<dbReference type="VGNC" id="VGNC:30512">
    <property type="gene designation" value="KCTD4"/>
</dbReference>
<dbReference type="eggNOG" id="KOG2723">
    <property type="taxonomic scope" value="Eukaryota"/>
</dbReference>
<dbReference type="GeneTree" id="ENSGT00940000159552"/>
<dbReference type="HOGENOM" id="CLU_1081647_0_0_1"/>
<dbReference type="InParanoid" id="A6H6X4"/>
<dbReference type="OMA" id="GKKPVQH"/>
<dbReference type="OrthoDB" id="2414723at2759"/>
<dbReference type="TreeFam" id="TF315332"/>
<dbReference type="Proteomes" id="UP000009136">
    <property type="component" value="Chromosome 12"/>
</dbReference>
<dbReference type="Bgee" id="ENSBTAG00000019416">
    <property type="expression patterns" value="Expressed in occipital lobe and 39 other cell types or tissues"/>
</dbReference>
<dbReference type="GO" id="GO:0051260">
    <property type="term" value="P:protein homooligomerization"/>
    <property type="evidence" value="ECO:0007669"/>
    <property type="project" value="InterPro"/>
</dbReference>
<dbReference type="CDD" id="cd18364">
    <property type="entry name" value="BTB_POZ_KCTD4"/>
    <property type="match status" value="1"/>
</dbReference>
<dbReference type="Gene3D" id="3.30.710.10">
    <property type="entry name" value="Potassium Channel Kv1.1, Chain A"/>
    <property type="match status" value="1"/>
</dbReference>
<dbReference type="InterPro" id="IPR000210">
    <property type="entry name" value="BTB/POZ_dom"/>
</dbReference>
<dbReference type="InterPro" id="IPR045740">
    <property type="entry name" value="KCTD4_C"/>
</dbReference>
<dbReference type="InterPro" id="IPR011333">
    <property type="entry name" value="SKP1/BTB/POZ_sf"/>
</dbReference>
<dbReference type="InterPro" id="IPR003131">
    <property type="entry name" value="T1-type_BTB"/>
</dbReference>
<dbReference type="PANTHER" id="PTHR14499:SF9">
    <property type="entry name" value="BTB_POZ DOMAIN-CONTAINING PROTEIN KCTD4"/>
    <property type="match status" value="1"/>
</dbReference>
<dbReference type="PANTHER" id="PTHR14499">
    <property type="entry name" value="POTASSIUM CHANNEL TETRAMERIZATION DOMAIN-CONTAINING"/>
    <property type="match status" value="1"/>
</dbReference>
<dbReference type="Pfam" id="PF02214">
    <property type="entry name" value="BTB_2"/>
    <property type="match status" value="1"/>
</dbReference>
<dbReference type="Pfam" id="PF19323">
    <property type="entry name" value="KCTD4_C"/>
    <property type="match status" value="1"/>
</dbReference>
<dbReference type="SMART" id="SM00225">
    <property type="entry name" value="BTB"/>
    <property type="match status" value="1"/>
</dbReference>
<dbReference type="SUPFAM" id="SSF54695">
    <property type="entry name" value="POZ domain"/>
    <property type="match status" value="1"/>
</dbReference>
<name>KCTD4_BOVIN</name>
<evidence type="ECO:0000256" key="1">
    <source>
        <dbReference type="SAM" id="MobiDB-lite"/>
    </source>
</evidence>
<gene>
    <name type="primary">KCTD4</name>
</gene>
<reference key="1">
    <citation type="submission" date="2007-06" db="EMBL/GenBank/DDBJ databases">
        <authorList>
            <consortium name="NIH - Mammalian Gene Collection (MGC) project"/>
        </authorList>
    </citation>
    <scope>NUCLEOTIDE SEQUENCE [LARGE SCALE MRNA]</scope>
    <source>
        <strain>Hereford</strain>
        <tissue>Hypothalamus</tissue>
    </source>
</reference>
<accession>A6H6X4</accession>
<sequence>MEHKINRREKEKDYEGKHNSLEDADQGKNCKSTLMTLNVGGYLYITQKQTLTKYPDTFLEGIVNGKILCPFDADGHYFIDRDGLLFRHVLNFLRNGELLLPEGFRENQLLAQEAEFFQLKGLAEEVKSRWEKEQLTPRETTFLEITDNHDRSQGLRIFCNAPDFISKIKSRIVLVSKSRLDGFPEEFSISSNTIQFKYFIKSENGTRLVLKEDNTFVCTLETLKFEAIMMALKCGFRLLTSLDCSKGSIVHSDALHFIK</sequence>
<protein>
    <recommendedName>
        <fullName>BTB/POZ domain-containing protein KCTD4</fullName>
    </recommendedName>
</protein>
<feature type="chain" id="PRO_0000350571" description="BTB/POZ domain-containing protein KCTD4">
    <location>
        <begin position="1"/>
        <end position="259"/>
    </location>
</feature>
<feature type="domain" description="BTB">
    <location>
        <begin position="33"/>
        <end position="134"/>
    </location>
</feature>
<feature type="region of interest" description="Disordered" evidence="1">
    <location>
        <begin position="1"/>
        <end position="22"/>
    </location>
</feature>